<accession>A5VAG4</accession>
<keyword id="KW-0028">Amino-acid biosynthesis</keyword>
<keyword id="KW-0963">Cytoplasm</keyword>
<keyword id="KW-0413">Isomerase</keyword>
<keyword id="KW-0457">Lysine biosynthesis</keyword>
<keyword id="KW-1185">Reference proteome</keyword>
<gene>
    <name evidence="1" type="primary">dapF</name>
    <name type="ordered locus">Swit_2928</name>
</gene>
<protein>
    <recommendedName>
        <fullName evidence="1">Diaminopimelate epimerase</fullName>
        <shortName evidence="1">DAP epimerase</shortName>
        <ecNumber evidence="1">5.1.1.7</ecNumber>
    </recommendedName>
    <alternativeName>
        <fullName evidence="1">PLP-independent amino acid racemase</fullName>
    </alternativeName>
</protein>
<proteinExistence type="inferred from homology"/>
<evidence type="ECO:0000255" key="1">
    <source>
        <dbReference type="HAMAP-Rule" id="MF_00197"/>
    </source>
</evidence>
<name>DAPF_RHIWR</name>
<dbReference type="EC" id="5.1.1.7" evidence="1"/>
<dbReference type="EMBL" id="CP000699">
    <property type="protein sequence ID" value="ABQ69280.1"/>
    <property type="molecule type" value="Genomic_DNA"/>
</dbReference>
<dbReference type="SMR" id="A5VAG4"/>
<dbReference type="STRING" id="392499.Swit_2928"/>
<dbReference type="PaxDb" id="392499-Swit_2928"/>
<dbReference type="KEGG" id="swi:Swit_2928"/>
<dbReference type="eggNOG" id="COG0253">
    <property type="taxonomic scope" value="Bacteria"/>
</dbReference>
<dbReference type="HOGENOM" id="CLU_053306_1_0_5"/>
<dbReference type="OrthoDB" id="9805408at2"/>
<dbReference type="UniPathway" id="UPA00034">
    <property type="reaction ID" value="UER00025"/>
</dbReference>
<dbReference type="Proteomes" id="UP000001989">
    <property type="component" value="Chromosome"/>
</dbReference>
<dbReference type="GO" id="GO:0005829">
    <property type="term" value="C:cytosol"/>
    <property type="evidence" value="ECO:0007669"/>
    <property type="project" value="TreeGrafter"/>
</dbReference>
<dbReference type="GO" id="GO:0008837">
    <property type="term" value="F:diaminopimelate epimerase activity"/>
    <property type="evidence" value="ECO:0007669"/>
    <property type="project" value="UniProtKB-UniRule"/>
</dbReference>
<dbReference type="GO" id="GO:0009089">
    <property type="term" value="P:lysine biosynthetic process via diaminopimelate"/>
    <property type="evidence" value="ECO:0007669"/>
    <property type="project" value="UniProtKB-UniRule"/>
</dbReference>
<dbReference type="Gene3D" id="3.10.310.10">
    <property type="entry name" value="Diaminopimelate Epimerase, Chain A, domain 1"/>
    <property type="match status" value="2"/>
</dbReference>
<dbReference type="HAMAP" id="MF_00197">
    <property type="entry name" value="DAP_epimerase"/>
    <property type="match status" value="1"/>
</dbReference>
<dbReference type="InterPro" id="IPR018510">
    <property type="entry name" value="DAP_epimerase_AS"/>
</dbReference>
<dbReference type="InterPro" id="IPR001653">
    <property type="entry name" value="DAP_epimerase_DapF"/>
</dbReference>
<dbReference type="NCBIfam" id="TIGR00652">
    <property type="entry name" value="DapF"/>
    <property type="match status" value="1"/>
</dbReference>
<dbReference type="PANTHER" id="PTHR31689:SF0">
    <property type="entry name" value="DIAMINOPIMELATE EPIMERASE"/>
    <property type="match status" value="1"/>
</dbReference>
<dbReference type="PANTHER" id="PTHR31689">
    <property type="entry name" value="DIAMINOPIMELATE EPIMERASE, CHLOROPLASTIC"/>
    <property type="match status" value="1"/>
</dbReference>
<dbReference type="Pfam" id="PF01678">
    <property type="entry name" value="DAP_epimerase"/>
    <property type="match status" value="2"/>
</dbReference>
<dbReference type="SUPFAM" id="SSF54506">
    <property type="entry name" value="Diaminopimelate epimerase-like"/>
    <property type="match status" value="2"/>
</dbReference>
<dbReference type="PROSITE" id="PS01326">
    <property type="entry name" value="DAP_EPIMERASE"/>
    <property type="match status" value="1"/>
</dbReference>
<feature type="chain" id="PRO_1000011973" description="Diaminopimelate epimerase">
    <location>
        <begin position="1"/>
        <end position="274"/>
    </location>
</feature>
<feature type="active site" description="Proton donor" evidence="1">
    <location>
        <position position="74"/>
    </location>
</feature>
<feature type="active site" description="Proton acceptor" evidence="1">
    <location>
        <position position="209"/>
    </location>
</feature>
<feature type="binding site" evidence="1">
    <location>
        <position position="13"/>
    </location>
    <ligand>
        <name>substrate</name>
    </ligand>
</feature>
<feature type="binding site" evidence="1">
    <location>
        <position position="47"/>
    </location>
    <ligand>
        <name>substrate</name>
    </ligand>
</feature>
<feature type="binding site" evidence="1">
    <location>
        <position position="65"/>
    </location>
    <ligand>
        <name>substrate</name>
    </ligand>
</feature>
<feature type="binding site" evidence="1">
    <location>
        <begin position="75"/>
        <end position="76"/>
    </location>
    <ligand>
        <name>substrate</name>
    </ligand>
</feature>
<feature type="binding site" evidence="1">
    <location>
        <position position="149"/>
    </location>
    <ligand>
        <name>substrate</name>
    </ligand>
</feature>
<feature type="binding site" evidence="1">
    <location>
        <position position="182"/>
    </location>
    <ligand>
        <name>substrate</name>
    </ligand>
</feature>
<feature type="binding site" evidence="1">
    <location>
        <begin position="200"/>
        <end position="201"/>
    </location>
    <ligand>
        <name>substrate</name>
    </ligand>
</feature>
<feature type="binding site" evidence="1">
    <location>
        <begin position="210"/>
        <end position="211"/>
    </location>
    <ligand>
        <name>substrate</name>
    </ligand>
</feature>
<feature type="site" description="Could be important to modulate the pK values of the two catalytic cysteine residues" evidence="1">
    <location>
        <position position="151"/>
    </location>
</feature>
<feature type="site" description="Could be important to modulate the pK values of the two catalytic cysteine residues" evidence="1">
    <location>
        <position position="200"/>
    </location>
</feature>
<sequence length="274" mass="28927">MQVRFHKMHGLGNDFVVIDARATAPVEMTAARARALADRKTGVGCDQLILLEPSAVADARMRIFNADGSEVEACGNATRCVVSLLGGSARIETVAGLLEGRSADGQVSVELGEPRFDWDAIPLAYAMDTRAMPVAWEELEAPMAANVGNPHVVFFVPETDAVALDRLGPRIETDPLFPARINVNVATVDDRANIRLRVWERGVGLTDACGTGACATAVSAIRAGLVDSPVRVTLPGGPLTIDWAPGRPIVMTGPATHVFTAETDLSAFGADSRG</sequence>
<organism>
    <name type="scientific">Rhizorhabdus wittichii (strain DSM 6014 / CCUG 31198 / JCM 15750 / NBRC 105917 / EY 4224 / RW1)</name>
    <name type="common">Sphingomonas wittichii</name>
    <dbReference type="NCBI Taxonomy" id="392499"/>
    <lineage>
        <taxon>Bacteria</taxon>
        <taxon>Pseudomonadati</taxon>
        <taxon>Pseudomonadota</taxon>
        <taxon>Alphaproteobacteria</taxon>
        <taxon>Sphingomonadales</taxon>
        <taxon>Sphingomonadaceae</taxon>
        <taxon>Rhizorhabdus</taxon>
    </lineage>
</organism>
<comment type="function">
    <text evidence="1">Catalyzes the stereoinversion of LL-2,6-diaminopimelate (L,L-DAP) to meso-diaminopimelate (meso-DAP), a precursor of L-lysine and an essential component of the bacterial peptidoglycan.</text>
</comment>
<comment type="catalytic activity">
    <reaction evidence="1">
        <text>(2S,6S)-2,6-diaminopimelate = meso-2,6-diaminopimelate</text>
        <dbReference type="Rhea" id="RHEA:15393"/>
        <dbReference type="ChEBI" id="CHEBI:57609"/>
        <dbReference type="ChEBI" id="CHEBI:57791"/>
        <dbReference type="EC" id="5.1.1.7"/>
    </reaction>
</comment>
<comment type="pathway">
    <text evidence="1">Amino-acid biosynthesis; L-lysine biosynthesis via DAP pathway; DL-2,6-diaminopimelate from LL-2,6-diaminopimelate: step 1/1.</text>
</comment>
<comment type="subunit">
    <text evidence="1">Homodimer.</text>
</comment>
<comment type="subcellular location">
    <subcellularLocation>
        <location evidence="1">Cytoplasm</location>
    </subcellularLocation>
</comment>
<comment type="similarity">
    <text evidence="1">Belongs to the diaminopimelate epimerase family.</text>
</comment>
<reference key="1">
    <citation type="journal article" date="2010" name="J. Bacteriol.">
        <title>Genome sequence of the dioxin-mineralizing bacterium Sphingomonas wittichii RW1.</title>
        <authorList>
            <person name="Miller T.R."/>
            <person name="Delcher A.L."/>
            <person name="Salzberg S.L."/>
            <person name="Saunders E."/>
            <person name="Detter J.C."/>
            <person name="Halden R.U."/>
        </authorList>
    </citation>
    <scope>NUCLEOTIDE SEQUENCE [LARGE SCALE GENOMIC DNA]</scope>
    <source>
        <strain>DSM 6014 / CCUG 31198 / JCM 15750 / NBRC 105917 / EY 4224 / RW1</strain>
    </source>
</reference>